<reference evidence="7" key="1">
    <citation type="submission" date="2008-03" db="EMBL/GenBank/DDBJ databases">
        <title>Sequencing of the draft genome and assembly of Burkholderia graminis C4D1M.</title>
        <authorList>
            <consortium name="US DOE Joint Genome Institute (JGI-PGF)"/>
            <person name="Copeland A."/>
            <person name="Lucas S."/>
            <person name="Lapidus A."/>
            <person name="Glavina del Rio T."/>
            <person name="Dalin E."/>
            <person name="Tice H."/>
            <person name="Bruce D."/>
            <person name="Goodwin L."/>
            <person name="Pitluck S."/>
            <person name="Larimer F."/>
            <person name="Land M.L."/>
            <person name="Hauser L."/>
            <person name="Tiedje J."/>
            <person name="Richardson P."/>
        </authorList>
    </citation>
    <scope>NUCLEOTIDE SEQUENCE [LARGE SCALE GENOMIC DNA]</scope>
    <source>
        <strain>ATCC 700544 / DSM 17151 / LMG 18924 / NCIMB 13744 / C4D1M</strain>
    </source>
</reference>
<reference evidence="6" key="2">
    <citation type="submission" date="2020-04" db="EMBL/GenBank/DDBJ databases">
        <authorList>
            <person name="De Canck E."/>
        </authorList>
    </citation>
    <scope>NUCLEOTIDE SEQUENCE [LARGE SCALE GENOMIC DNA]</scope>
    <source>
        <strain>ATCC 700544 / DSM 17151 / LMG 18924 / NCIMB 13744 / C4D1M</strain>
    </source>
</reference>
<reference key="3">
    <citation type="journal article" date="2014" name="Nat. Chem. Biol.">
        <title>Revealing the hidden functional diversity of an enzyme family.</title>
        <authorList>
            <person name="Bastard K."/>
            <person name="Smith A.A."/>
            <person name="Vergne-Vaxelaire C."/>
            <person name="Perret A."/>
            <person name="Zaparucha A."/>
            <person name="De Melo-Minardi R."/>
            <person name="Mariage A."/>
            <person name="Boutard M."/>
            <person name="Debard A."/>
            <person name="Lechaplais C."/>
            <person name="Pelle C."/>
            <person name="Pellouin V."/>
            <person name="Perchat N."/>
            <person name="Petit J.L."/>
            <person name="Kreimeyer A."/>
            <person name="Medigue C."/>
            <person name="Weissenbach J."/>
            <person name="Artiguenave F."/>
            <person name="De Berardinis V."/>
            <person name="Vallenet D."/>
            <person name="Salanoubat M."/>
        </authorList>
    </citation>
    <scope>FUNCTION</scope>
    <scope>CATALYTIC ACTIVITY</scope>
    <scope>BIOPHYSICOCHEMICAL PROPERTIES</scope>
</reference>
<proteinExistence type="evidence at protein level"/>
<keyword id="KW-0012">Acyltransferase</keyword>
<keyword id="KW-0479">Metal-binding</keyword>
<keyword id="KW-1185">Reference proteome</keyword>
<keyword id="KW-0808">Transferase</keyword>
<keyword id="KW-0862">Zinc</keyword>
<feature type="chain" id="PRO_0000461640" description="3,5-dioxohexanoate:acetyl-CoA acetone transferase">
    <location>
        <begin position="1"/>
        <end position="310"/>
    </location>
</feature>
<feature type="binding site" evidence="1">
    <location>
        <position position="49"/>
    </location>
    <ligand>
        <name>Zn(2+)</name>
        <dbReference type="ChEBI" id="CHEBI:29105"/>
    </ligand>
</feature>
<feature type="binding site" evidence="1">
    <location>
        <position position="51"/>
    </location>
    <ligand>
        <name>Zn(2+)</name>
        <dbReference type="ChEBI" id="CHEBI:29105"/>
    </ligand>
</feature>
<feature type="binding site" evidence="1">
    <location>
        <position position="258"/>
    </location>
    <ligand>
        <name>Zn(2+)</name>
        <dbReference type="ChEBI" id="CHEBI:29105"/>
    </ligand>
</feature>
<comment type="function">
    <text evidence="2">Catalyzes the condensation of 3,5-dioxohexanoate and acetyl-CoA, forming acetoacetate and acetoacetyl-CoA (PubMed:24240508). May be involved in fatty acid biosynthesis rescue via triacetic acid lactone (PubMed:24240508).</text>
</comment>
<comment type="catalytic activity">
    <reaction evidence="2">
        <text>3,5-dioxohexanoate + acetyl-CoA = acetoacetyl-CoA + acetoacetate</text>
        <dbReference type="Rhea" id="RHEA:79655"/>
        <dbReference type="ChEBI" id="CHEBI:13705"/>
        <dbReference type="ChEBI" id="CHEBI:57286"/>
        <dbReference type="ChEBI" id="CHEBI:57288"/>
        <dbReference type="ChEBI" id="CHEBI:57814"/>
        <dbReference type="EC" id="2.3.1.319"/>
    </reaction>
</comment>
<comment type="cofactor">
    <cofactor evidence="1">
        <name>Zn(2+)</name>
        <dbReference type="ChEBI" id="CHEBI:29105"/>
    </cofactor>
</comment>
<comment type="biophysicochemical properties">
    <kinetics>
        <KM evidence="2">252 uM for acetyl-CoA</KM>
        <KM evidence="2">10960 uM for beta-ketohexanoate</KM>
        <KM evidence="2">4290 uM for beta-keto-5-aminohexanoate</KM>
        <text evidence="2">kcat is 0.97 sec(-1) with acetyl-CoA as substrate. kcat is 0.03 sec(-1) with beta-keto-5-aminohexanoate as substrate.</text>
    </kinetics>
</comment>
<comment type="similarity">
    <text evidence="5">Belongs to the BKACE family.</text>
</comment>
<accession>B1G5Y9</accession>
<organism>
    <name type="scientific">Paraburkholderia graminis (strain ATCC 700544 / DSM 17151 / LMG 18924 / NCIMB 13744 / C4D1M)</name>
    <dbReference type="NCBI Taxonomy" id="396598"/>
    <lineage>
        <taxon>Bacteria</taxon>
        <taxon>Pseudomonadati</taxon>
        <taxon>Pseudomonadota</taxon>
        <taxon>Betaproteobacteria</taxon>
        <taxon>Burkholderiales</taxon>
        <taxon>Burkholderiaceae</taxon>
        <taxon>Paraburkholderia</taxon>
    </lineage>
</organism>
<evidence type="ECO:0000250" key="1">
    <source>
        <dbReference type="UniProtKB" id="B0VHH0"/>
    </source>
</evidence>
<evidence type="ECO:0000269" key="2">
    <source>
    </source>
</evidence>
<evidence type="ECO:0000303" key="3">
    <source>
    </source>
</evidence>
<evidence type="ECO:0000305" key="4"/>
<evidence type="ECO:0000305" key="5">
    <source>
    </source>
</evidence>
<evidence type="ECO:0000312" key="6">
    <source>
        <dbReference type="EMBL" id="CAB3715113.1"/>
    </source>
</evidence>
<evidence type="ECO:0000312" key="7">
    <source>
        <dbReference type="EMBL" id="EDT08458.1"/>
    </source>
</evidence>
<gene>
    <name evidence="6" type="primary">kce_3</name>
    <name evidence="7" type="ORF">BgramDRAFT_4880</name>
    <name evidence="6" type="ORF">R8871_04389</name>
</gene>
<sequence>MATKRKVIITCAPTGAIHTPSMSPYLPVTPQQIGDAALAAAKEGAAIIHLHARDPDDGHPTQDPAVFQEFLPRIKAECDAVINLTTGGSPHMTVAERLKPAHHFQPEVASLNMGSMNFGLYPMLERFKELKYDWERKHLENSRDLVFKNTFADIEYILTSCGANGTRFEFECYDISHLYNLAHFVDRGLAKPPFFVQSVFGLLGGIGAHPEDLAHMRRTADRLFGKDYVWSILGAGRNQIPLASIGVAQGSNARVGLEDSLWIEPGKLAESSAAQVRKIRQVIEGLSLDIATPAEAREMLQLKGAANTNF</sequence>
<protein>
    <recommendedName>
        <fullName evidence="4">3,5-dioxohexanoate:acetyl-CoA acetone transferase</fullName>
        <ecNumber evidence="2">2.3.1.319</ecNumber>
    </recommendedName>
    <alternativeName>
        <fullName evidence="4">3,5-dioxohexanoate cleavage enzyme</fullName>
    </alternativeName>
    <alternativeName>
        <fullName evidence="3">BKACE_274</fullName>
    </alternativeName>
</protein>
<name>DOHCE_PARG4</name>
<dbReference type="EC" id="2.3.1.319" evidence="2"/>
<dbReference type="EMBL" id="CADIKA010000010">
    <property type="protein sequence ID" value="CAB3715113.1"/>
    <property type="molecule type" value="Genomic_DNA"/>
</dbReference>
<dbReference type="EMBL" id="ABLD01000018">
    <property type="protein sequence ID" value="EDT08458.1"/>
    <property type="molecule type" value="Genomic_DNA"/>
</dbReference>
<dbReference type="RefSeq" id="WP_006051452.1">
    <property type="nucleotide sequence ID" value="NZ_CADIKA010000010.1"/>
</dbReference>
<dbReference type="OrthoDB" id="9155960at2"/>
<dbReference type="Proteomes" id="UP000005045">
    <property type="component" value="Unassembled WGS sequence"/>
</dbReference>
<dbReference type="GO" id="GO:0043720">
    <property type="term" value="F:3-keto-5-aminohexanoate cleavage activity"/>
    <property type="evidence" value="ECO:0007669"/>
    <property type="project" value="InterPro"/>
</dbReference>
<dbReference type="GO" id="GO:0046872">
    <property type="term" value="F:metal ion binding"/>
    <property type="evidence" value="ECO:0007669"/>
    <property type="project" value="UniProtKB-KW"/>
</dbReference>
<dbReference type="Gene3D" id="3.20.20.70">
    <property type="entry name" value="Aldolase class I"/>
    <property type="match status" value="1"/>
</dbReference>
<dbReference type="InterPro" id="IPR013785">
    <property type="entry name" value="Aldolase_TIM"/>
</dbReference>
<dbReference type="InterPro" id="IPR008567">
    <property type="entry name" value="BKACE"/>
</dbReference>
<dbReference type="PANTHER" id="PTHR37418:SF2">
    <property type="entry name" value="3-KETO-5-AMINOHEXANOATE CLEAVAGE ENZYME"/>
    <property type="match status" value="1"/>
</dbReference>
<dbReference type="PANTHER" id="PTHR37418">
    <property type="entry name" value="3-KETO-5-AMINOHEXANOATE CLEAVAGE ENZYME-RELATED"/>
    <property type="match status" value="1"/>
</dbReference>
<dbReference type="Pfam" id="PF05853">
    <property type="entry name" value="BKACE"/>
    <property type="match status" value="1"/>
</dbReference>